<sequence>MINVEIIKNYDKWREHKQINKSLIKKITQNVLLRFDNFSKIKQFELSILLTNTAEILTLNKQFRNIEKATNVLSFPSNELNWQDLYSKLEFLGDSDYIHLGDIAFCYEVIYNESCEQQKNFENHFIHLLIHSILHLIGFDHQNDTEANIMENLEIEILSYFGISSPY</sequence>
<accession>Q4UK98</accession>
<name>YBEY_RICFE</name>
<reference key="1">
    <citation type="journal article" date="2005" name="PLoS Biol.">
        <title>The genome sequence of Rickettsia felis identifies the first putative conjugative plasmid in an obligate intracellular parasite.</title>
        <authorList>
            <person name="Ogata H."/>
            <person name="Renesto P."/>
            <person name="Audic S."/>
            <person name="Robert C."/>
            <person name="Blanc G."/>
            <person name="Fournier P.-E."/>
            <person name="Parinello H."/>
            <person name="Claverie J.-M."/>
            <person name="Raoult D."/>
        </authorList>
    </citation>
    <scope>NUCLEOTIDE SEQUENCE [LARGE SCALE GENOMIC DNA]</scope>
    <source>
        <strain>ATCC VR-1525 / URRWXCal2</strain>
    </source>
</reference>
<protein>
    <recommendedName>
        <fullName evidence="1">Endoribonuclease YbeY</fullName>
        <ecNumber evidence="1">3.1.-.-</ecNumber>
    </recommendedName>
</protein>
<keyword id="KW-0963">Cytoplasm</keyword>
<keyword id="KW-0255">Endonuclease</keyword>
<keyword id="KW-0378">Hydrolase</keyword>
<keyword id="KW-0479">Metal-binding</keyword>
<keyword id="KW-0540">Nuclease</keyword>
<keyword id="KW-0690">Ribosome biogenesis</keyword>
<keyword id="KW-0698">rRNA processing</keyword>
<keyword id="KW-0862">Zinc</keyword>
<feature type="chain" id="PRO_0000277992" description="Endoribonuclease YbeY">
    <location>
        <begin position="1"/>
        <end position="167"/>
    </location>
</feature>
<feature type="binding site" evidence="1">
    <location>
        <position position="131"/>
    </location>
    <ligand>
        <name>Zn(2+)</name>
        <dbReference type="ChEBI" id="CHEBI:29105"/>
        <note>catalytic</note>
    </ligand>
</feature>
<feature type="binding site" evidence="1">
    <location>
        <position position="135"/>
    </location>
    <ligand>
        <name>Zn(2+)</name>
        <dbReference type="ChEBI" id="CHEBI:29105"/>
        <note>catalytic</note>
    </ligand>
</feature>
<feature type="binding site" evidence="1">
    <location>
        <position position="141"/>
    </location>
    <ligand>
        <name>Zn(2+)</name>
        <dbReference type="ChEBI" id="CHEBI:29105"/>
        <note>catalytic</note>
    </ligand>
</feature>
<organism>
    <name type="scientific">Rickettsia felis (strain ATCC VR-1525 / URRWXCal2)</name>
    <name type="common">Rickettsia azadi</name>
    <dbReference type="NCBI Taxonomy" id="315456"/>
    <lineage>
        <taxon>Bacteria</taxon>
        <taxon>Pseudomonadati</taxon>
        <taxon>Pseudomonadota</taxon>
        <taxon>Alphaproteobacteria</taxon>
        <taxon>Rickettsiales</taxon>
        <taxon>Rickettsiaceae</taxon>
        <taxon>Rickettsieae</taxon>
        <taxon>Rickettsia</taxon>
        <taxon>spotted fever group</taxon>
    </lineage>
</organism>
<dbReference type="EC" id="3.1.-.-" evidence="1"/>
<dbReference type="EMBL" id="CP000053">
    <property type="protein sequence ID" value="AAY62037.1"/>
    <property type="molecule type" value="Genomic_DNA"/>
</dbReference>
<dbReference type="SMR" id="Q4UK98"/>
<dbReference type="STRING" id="315456.RF_1186"/>
<dbReference type="KEGG" id="rfe:RF_1186"/>
<dbReference type="eggNOG" id="COG0319">
    <property type="taxonomic scope" value="Bacteria"/>
</dbReference>
<dbReference type="HOGENOM" id="CLU_106710_0_0_5"/>
<dbReference type="OrthoDB" id="9807740at2"/>
<dbReference type="Proteomes" id="UP000008548">
    <property type="component" value="Chromosome"/>
</dbReference>
<dbReference type="GO" id="GO:0005737">
    <property type="term" value="C:cytoplasm"/>
    <property type="evidence" value="ECO:0007669"/>
    <property type="project" value="UniProtKB-SubCell"/>
</dbReference>
<dbReference type="GO" id="GO:0004222">
    <property type="term" value="F:metalloendopeptidase activity"/>
    <property type="evidence" value="ECO:0007669"/>
    <property type="project" value="InterPro"/>
</dbReference>
<dbReference type="GO" id="GO:0004521">
    <property type="term" value="F:RNA endonuclease activity"/>
    <property type="evidence" value="ECO:0007669"/>
    <property type="project" value="UniProtKB-UniRule"/>
</dbReference>
<dbReference type="GO" id="GO:0008270">
    <property type="term" value="F:zinc ion binding"/>
    <property type="evidence" value="ECO:0007669"/>
    <property type="project" value="UniProtKB-UniRule"/>
</dbReference>
<dbReference type="GO" id="GO:0006364">
    <property type="term" value="P:rRNA processing"/>
    <property type="evidence" value="ECO:0007669"/>
    <property type="project" value="UniProtKB-UniRule"/>
</dbReference>
<dbReference type="Gene3D" id="3.40.390.30">
    <property type="entry name" value="Metalloproteases ('zincins'), catalytic domain"/>
    <property type="match status" value="1"/>
</dbReference>
<dbReference type="HAMAP" id="MF_00009">
    <property type="entry name" value="Endoribonucl_YbeY"/>
    <property type="match status" value="1"/>
</dbReference>
<dbReference type="InterPro" id="IPR023091">
    <property type="entry name" value="MetalPrtase_cat_dom_sf_prd"/>
</dbReference>
<dbReference type="InterPro" id="IPR002036">
    <property type="entry name" value="YbeY"/>
</dbReference>
<dbReference type="InterPro" id="IPR020549">
    <property type="entry name" value="YbeY_CS"/>
</dbReference>
<dbReference type="NCBIfam" id="TIGR00043">
    <property type="entry name" value="rRNA maturation RNase YbeY"/>
    <property type="match status" value="1"/>
</dbReference>
<dbReference type="PANTHER" id="PTHR46986">
    <property type="entry name" value="ENDORIBONUCLEASE YBEY, CHLOROPLASTIC"/>
    <property type="match status" value="1"/>
</dbReference>
<dbReference type="PANTHER" id="PTHR46986:SF1">
    <property type="entry name" value="ENDORIBONUCLEASE YBEY, CHLOROPLASTIC"/>
    <property type="match status" value="1"/>
</dbReference>
<dbReference type="Pfam" id="PF02130">
    <property type="entry name" value="YbeY"/>
    <property type="match status" value="1"/>
</dbReference>
<dbReference type="SUPFAM" id="SSF55486">
    <property type="entry name" value="Metalloproteases ('zincins'), catalytic domain"/>
    <property type="match status" value="1"/>
</dbReference>
<dbReference type="PROSITE" id="PS01306">
    <property type="entry name" value="UPF0054"/>
    <property type="match status" value="1"/>
</dbReference>
<evidence type="ECO:0000255" key="1">
    <source>
        <dbReference type="HAMAP-Rule" id="MF_00009"/>
    </source>
</evidence>
<gene>
    <name evidence="1" type="primary">ybeY</name>
    <name type="ordered locus">RF_1186</name>
</gene>
<comment type="function">
    <text evidence="1">Single strand-specific metallo-endoribonuclease involved in late-stage 70S ribosome quality control and in maturation of the 3' terminus of the 16S rRNA.</text>
</comment>
<comment type="cofactor">
    <cofactor evidence="1">
        <name>Zn(2+)</name>
        <dbReference type="ChEBI" id="CHEBI:29105"/>
    </cofactor>
    <text evidence="1">Binds 1 zinc ion.</text>
</comment>
<comment type="subcellular location">
    <subcellularLocation>
        <location evidence="1">Cytoplasm</location>
    </subcellularLocation>
</comment>
<comment type="similarity">
    <text evidence="1">Belongs to the endoribonuclease YbeY family.</text>
</comment>
<proteinExistence type="inferred from homology"/>